<evidence type="ECO:0000250" key="1">
    <source>
        <dbReference type="UniProtKB" id="P31602"/>
    </source>
</evidence>
<evidence type="ECO:0000255" key="2"/>
<evidence type="ECO:0000269" key="3">
    <source>
    </source>
</evidence>
<evidence type="ECO:0000303" key="4">
    <source>
    </source>
</evidence>
<evidence type="ECO:0000305" key="5"/>
<sequence>MTNMTQASATEKKGAGDLLRFKIFGMPLPLYAFALITLLLSHFYNAIPTDLVGGFALMFVMGAIFGEIGKRLPIFNKYIGGAPVMIFLVAAYFVYAGIFTQKEIDAISNVMDKSNFLNLFIAVLITGAILSVNRKLLLKSLLGYIPTILAGIVGASLFGIVIGLCFGIPVDRIMMLYVLPIMGGGNGAGAVPLSEIYHSVTGRSREEYYSTAIAILTIANIFAIIFAALLDMIGKKYTWLSGEGELVRKASFKTEDDEKAGQITHRETAVGMVLSTTCFLLAYVVAKKILPSIGGVSIHYFAWMVLIVAALNASGLCSPEIKAGAKRLSDFFSKQLLWVLMVGVGVCYTDLQEIIDALTFANVVIAAIIVVGAVVGAAIGGWLIGFYPIESSITAGLCMANRGGSGDLEVLSACNRMNLISYAQISSRLGGGIVLVIASIVFSMMV</sequence>
<dbReference type="EMBL" id="D10258">
    <property type="protein sequence ID" value="BAA01100.1"/>
    <property type="molecule type" value="Genomic_DNA"/>
</dbReference>
<dbReference type="PIR" id="B42661">
    <property type="entry name" value="B42661"/>
</dbReference>
<dbReference type="RefSeq" id="WP_000183596.1">
    <property type="nucleotide sequence ID" value="NZ_VDCP01000009.1"/>
</dbReference>
<dbReference type="SMR" id="P31603"/>
<dbReference type="PATRIC" id="fig|98360.39.peg.5154"/>
<dbReference type="OMA" id="CMANMGG"/>
<dbReference type="GO" id="GO:0005886">
    <property type="term" value="C:plasma membrane"/>
    <property type="evidence" value="ECO:0007669"/>
    <property type="project" value="UniProtKB-SubCell"/>
</dbReference>
<dbReference type="GO" id="GO:0046872">
    <property type="term" value="F:metal ion binding"/>
    <property type="evidence" value="ECO:0007669"/>
    <property type="project" value="UniProtKB-KW"/>
</dbReference>
<dbReference type="GO" id="GO:0008514">
    <property type="term" value="F:organic anion transmembrane transporter activity"/>
    <property type="evidence" value="ECO:0007669"/>
    <property type="project" value="InterPro"/>
</dbReference>
<dbReference type="GO" id="GO:0015293">
    <property type="term" value="F:symporter activity"/>
    <property type="evidence" value="ECO:0007669"/>
    <property type="project" value="UniProtKB-KW"/>
</dbReference>
<dbReference type="GO" id="GO:0006101">
    <property type="term" value="P:citrate metabolic process"/>
    <property type="evidence" value="ECO:0007669"/>
    <property type="project" value="UniProtKB-KW"/>
</dbReference>
<dbReference type="GO" id="GO:0006814">
    <property type="term" value="P:sodium ion transport"/>
    <property type="evidence" value="ECO:0007669"/>
    <property type="project" value="UniProtKB-KW"/>
</dbReference>
<dbReference type="InterPro" id="IPR018025">
    <property type="entry name" value="2-OHcarbox_trans_Prot/Firm"/>
</dbReference>
<dbReference type="InterPro" id="IPR004679">
    <property type="entry name" value="2-OHcarboxylate_transport"/>
</dbReference>
<dbReference type="NCBIfam" id="TIGR00783">
    <property type="entry name" value="ccs"/>
    <property type="match status" value="1"/>
</dbReference>
<dbReference type="PANTHER" id="PTHR40033:SF1">
    <property type="entry name" value="CITRATE-SODIUM SYMPORTER"/>
    <property type="match status" value="1"/>
</dbReference>
<dbReference type="PANTHER" id="PTHR40033">
    <property type="entry name" value="NA(+)-MALATE SYMPORTER"/>
    <property type="match status" value="1"/>
</dbReference>
<dbReference type="Pfam" id="PF03390">
    <property type="entry name" value="2HCT"/>
    <property type="match status" value="1"/>
</dbReference>
<dbReference type="PIRSF" id="PIRSF005348">
    <property type="entry name" value="YxkH"/>
    <property type="match status" value="1"/>
</dbReference>
<proteinExistence type="inferred from homology"/>
<organism>
    <name type="scientific">Salmonella dublin</name>
    <dbReference type="NCBI Taxonomy" id="98360"/>
    <lineage>
        <taxon>Bacteria</taxon>
        <taxon>Pseudomonadati</taxon>
        <taxon>Pseudomonadota</taxon>
        <taxon>Gammaproteobacteria</taxon>
        <taxon>Enterobacterales</taxon>
        <taxon>Enterobacteriaceae</taxon>
        <taxon>Salmonella</taxon>
    </lineage>
</organism>
<feature type="chain" id="PRO_0000088757" description="Citrate/sodium symporter">
    <location>
        <begin position="1"/>
        <end position="446"/>
    </location>
</feature>
<feature type="transmembrane region" description="Helical" evidence="2">
    <location>
        <begin position="23"/>
        <end position="43"/>
    </location>
</feature>
<feature type="transmembrane region" description="Helical" evidence="2">
    <location>
        <begin position="46"/>
        <end position="66"/>
    </location>
</feature>
<feature type="transmembrane region" description="Helical" evidence="2">
    <location>
        <begin position="79"/>
        <end position="99"/>
    </location>
</feature>
<feature type="transmembrane region" description="Helical" evidence="2">
    <location>
        <begin position="110"/>
        <end position="130"/>
    </location>
</feature>
<feature type="transmembrane region" description="Helical" evidence="2">
    <location>
        <begin position="148"/>
        <end position="168"/>
    </location>
</feature>
<feature type="transmembrane region" description="Helical" evidence="2">
    <location>
        <begin position="213"/>
        <end position="233"/>
    </location>
</feature>
<feature type="transmembrane region" description="Helical" evidence="2">
    <location>
        <begin position="267"/>
        <end position="287"/>
    </location>
</feature>
<feature type="transmembrane region" description="Helical" evidence="2">
    <location>
        <begin position="289"/>
        <end position="309"/>
    </location>
</feature>
<feature type="transmembrane region" description="Helical" evidence="2">
    <location>
        <begin position="335"/>
        <end position="355"/>
    </location>
</feature>
<feature type="transmembrane region" description="Helical" evidence="2">
    <location>
        <begin position="364"/>
        <end position="384"/>
    </location>
</feature>
<feature type="transmembrane region" description="Helical" evidence="2">
    <location>
        <begin position="425"/>
        <end position="445"/>
    </location>
</feature>
<feature type="binding site" evidence="1">
    <location>
        <position position="181"/>
    </location>
    <ligand>
        <name>Na(+)</name>
        <dbReference type="ChEBI" id="CHEBI:29101"/>
    </ligand>
</feature>
<feature type="binding site" evidence="1">
    <location>
        <position position="183"/>
    </location>
    <ligand>
        <name>Na(+)</name>
        <dbReference type="ChEBI" id="CHEBI:29101"/>
    </ligand>
</feature>
<feature type="binding site" evidence="1">
    <location>
        <position position="186"/>
    </location>
    <ligand>
        <name>citrate</name>
        <dbReference type="ChEBI" id="CHEBI:16947"/>
    </ligand>
</feature>
<feature type="binding site" evidence="1">
    <location>
        <position position="187"/>
    </location>
    <ligand>
        <name>citrate</name>
        <dbReference type="ChEBI" id="CHEBI:16947"/>
    </ligand>
</feature>
<feature type="binding site" evidence="1">
    <location>
        <position position="399"/>
    </location>
    <ligand>
        <name>Na(+)</name>
        <dbReference type="ChEBI" id="CHEBI:29101"/>
    </ligand>
</feature>
<feature type="binding site" evidence="1">
    <location>
        <position position="401"/>
    </location>
    <ligand>
        <name>Na(+)</name>
        <dbReference type="ChEBI" id="CHEBI:29101"/>
    </ligand>
</feature>
<feature type="binding site" evidence="1">
    <location>
        <position position="402"/>
    </location>
    <ligand>
        <name>citrate</name>
        <dbReference type="ChEBI" id="CHEBI:16947"/>
    </ligand>
</feature>
<feature type="binding site" evidence="1">
    <location>
        <position position="404"/>
    </location>
    <ligand>
        <name>citrate</name>
        <dbReference type="ChEBI" id="CHEBI:16947"/>
    </ligand>
</feature>
<feature type="binding site" evidence="1">
    <location>
        <position position="405"/>
    </location>
    <ligand>
        <name>citrate</name>
        <dbReference type="ChEBI" id="CHEBI:16947"/>
    </ligand>
</feature>
<feature type="binding site" evidence="1">
    <location>
        <position position="428"/>
    </location>
    <ligand>
        <name>citrate</name>
        <dbReference type="ChEBI" id="CHEBI:16947"/>
    </ligand>
</feature>
<name>CITN_SALDU</name>
<comment type="function">
    <text evidence="3">Secondary active transporter that catalyzes the uptake of citrate across the membrane with the concomitant uptake of sodium (PubMed:1374406). Is specific for citrate (PubMed:1374406).</text>
</comment>
<comment type="catalytic activity">
    <reaction evidence="1">
        <text>citrate(out) + 2 Na(+)(out) = citrate(in) + 2 Na(+)(in)</text>
        <dbReference type="Rhea" id="RHEA:79471"/>
        <dbReference type="ChEBI" id="CHEBI:16947"/>
        <dbReference type="ChEBI" id="CHEBI:29101"/>
    </reaction>
    <physiologicalReaction direction="left-to-right" evidence="1">
        <dbReference type="Rhea" id="RHEA:79472"/>
    </physiologicalReaction>
</comment>
<comment type="subunit">
    <text evidence="1">Homodimer.</text>
</comment>
<comment type="subcellular location">
    <subcellularLocation>
        <location evidence="1">Cell inner membrane</location>
        <topology evidence="1">Multi-pass membrane protein</topology>
    </subcellularLocation>
</comment>
<comment type="similarity">
    <text evidence="5">Belongs to the 2-hydroxycarboxylate transporter (2-HCT) (TC 2.A.24) family.</text>
</comment>
<protein>
    <recommendedName>
        <fullName evidence="5">Citrate/sodium symporter</fullName>
    </recommendedName>
    <alternativeName>
        <fullName evidence="4">Citrate carrier</fullName>
    </alternativeName>
    <alternativeName>
        <fullName evidence="5">Citrate transporter CitS</fullName>
    </alternativeName>
</protein>
<accession>P31603</accession>
<reference key="1">
    <citation type="journal article" date="1992" name="J. Biol. Chem.">
        <title>Cloning and nucleotide sequence of the gene (citC) encoding a citrate carrier from several Salmonella serovars.</title>
        <authorList>
            <person name="Ishiguro N."/>
            <person name="Izawa H."/>
            <person name="Shinagawa M."/>
            <person name="Shimamoto T."/>
            <person name="Tsuchiya T."/>
        </authorList>
    </citation>
    <scope>NUCLEOTIDE SEQUENCE [GENOMIC DNA]</scope>
    <scope>FUNCTION</scope>
    <source>
        <strain>35</strain>
    </source>
</reference>
<keyword id="KW-0997">Cell inner membrane</keyword>
<keyword id="KW-1003">Cell membrane</keyword>
<keyword id="KW-0163">Citrate utilization</keyword>
<keyword id="KW-0406">Ion transport</keyword>
<keyword id="KW-0472">Membrane</keyword>
<keyword id="KW-0479">Metal-binding</keyword>
<keyword id="KW-0915">Sodium</keyword>
<keyword id="KW-0739">Sodium transport</keyword>
<keyword id="KW-0769">Symport</keyword>
<keyword id="KW-0812">Transmembrane</keyword>
<keyword id="KW-1133">Transmembrane helix</keyword>
<keyword id="KW-0813">Transport</keyword>
<gene>
    <name evidence="1" type="primary">citS</name>
    <name evidence="4" type="synonym">citC</name>
</gene>